<organism>
    <name type="scientific">Azobacteroides pseudotrichonymphae genomovar. CFP2</name>
    <dbReference type="NCBI Taxonomy" id="511995"/>
    <lineage>
        <taxon>Bacteria</taxon>
        <taxon>Pseudomonadati</taxon>
        <taxon>Bacteroidota</taxon>
        <taxon>Bacteroidia</taxon>
        <taxon>Bacteroidales</taxon>
        <taxon>Candidatus Azobacteroides</taxon>
    </lineage>
</organism>
<gene>
    <name evidence="1" type="primary">dxs</name>
    <name type="ordered locus">CFPG_664</name>
</gene>
<protein>
    <recommendedName>
        <fullName evidence="1">1-deoxy-D-xylulose-5-phosphate synthase</fullName>
        <ecNumber evidence="1">2.2.1.7</ecNumber>
    </recommendedName>
    <alternativeName>
        <fullName evidence="1">1-deoxyxylulose-5-phosphate synthase</fullName>
        <shortName evidence="1">DXP synthase</shortName>
        <shortName evidence="1">DXPS</shortName>
    </alternativeName>
</protein>
<reference key="1">
    <citation type="journal article" date="2008" name="Science">
        <title>Genome of an endosymbiont coupling N2 fixation to cellulolysis within RT protist cells in termite gut.</title>
        <authorList>
            <person name="Hongoh Y."/>
            <person name="Sharma V.K."/>
            <person name="Prakash T."/>
            <person name="Noda S."/>
            <person name="Toh H."/>
            <person name="Taylor T.D."/>
            <person name="Kudo T."/>
            <person name="Sakaki Y."/>
            <person name="Toyoda A."/>
            <person name="Hattori M."/>
            <person name="Ohkuma M."/>
        </authorList>
    </citation>
    <scope>NUCLEOTIDE SEQUENCE [LARGE SCALE GENOMIC DNA]</scope>
</reference>
<keyword id="KW-0414">Isoprene biosynthesis</keyword>
<keyword id="KW-0460">Magnesium</keyword>
<keyword id="KW-0479">Metal-binding</keyword>
<keyword id="KW-1185">Reference proteome</keyword>
<keyword id="KW-0784">Thiamine biosynthesis</keyword>
<keyword id="KW-0786">Thiamine pyrophosphate</keyword>
<keyword id="KW-0808">Transferase</keyword>
<comment type="function">
    <text evidence="1">Catalyzes the acyloin condensation reaction between C atoms 2 and 3 of pyruvate and glyceraldehyde 3-phosphate to yield 1-deoxy-D-xylulose-5-phosphate (DXP).</text>
</comment>
<comment type="catalytic activity">
    <reaction evidence="1">
        <text>D-glyceraldehyde 3-phosphate + pyruvate + H(+) = 1-deoxy-D-xylulose 5-phosphate + CO2</text>
        <dbReference type="Rhea" id="RHEA:12605"/>
        <dbReference type="ChEBI" id="CHEBI:15361"/>
        <dbReference type="ChEBI" id="CHEBI:15378"/>
        <dbReference type="ChEBI" id="CHEBI:16526"/>
        <dbReference type="ChEBI" id="CHEBI:57792"/>
        <dbReference type="ChEBI" id="CHEBI:59776"/>
        <dbReference type="EC" id="2.2.1.7"/>
    </reaction>
</comment>
<comment type="cofactor">
    <cofactor evidence="1">
        <name>Mg(2+)</name>
        <dbReference type="ChEBI" id="CHEBI:18420"/>
    </cofactor>
    <text evidence="1">Binds 1 Mg(2+) ion per subunit.</text>
</comment>
<comment type="cofactor">
    <cofactor evidence="1">
        <name>thiamine diphosphate</name>
        <dbReference type="ChEBI" id="CHEBI:58937"/>
    </cofactor>
    <text evidence="1">Binds 1 thiamine pyrophosphate per subunit.</text>
</comment>
<comment type="pathway">
    <text evidence="1">Metabolic intermediate biosynthesis; 1-deoxy-D-xylulose 5-phosphate biosynthesis; 1-deoxy-D-xylulose 5-phosphate from D-glyceraldehyde 3-phosphate and pyruvate: step 1/1.</text>
</comment>
<comment type="subunit">
    <text evidence="1">Homodimer.</text>
</comment>
<comment type="similarity">
    <text evidence="1">Belongs to the transketolase family. DXPS subfamily.</text>
</comment>
<sequence>MKKISDYSLLFKINSPEDLRKLAIEQVEQVCKELREYIIEVLSENPGHLGSNLGTVELTVALHYVFNTPYDRIVWDVGHQAYGHKILTERRESFHTLRKLGGISGFPNPQESEYDAFIAGHASNSISAALGMAIASWLKGENRKIVAIIGDGSITGGLAFEGLNNVSSNPNDLLIVLNDNNMAIDRSVGGLSQSLIKITTSYTYNTIRFKLYNFLKKYSIIKERERGFILRFTNSLKALLTKQHNIFEGLNIRYFGPIDGHNIKELVKVFEDIKSMKGPKLLHVCTVKGKGFGPAENKADVWHAPGKFNPETGERIKVWSENLPSLYQDVFGHTLVELARMNNNIVGVTPAMSSGCSMTFLMKEMPHRTFDVGIAEGHAITFAAGLAKEGMIPFCNVYSSFMQRAYDNIIHDAVLQNLNMILCLDRAGLVGEDGVTHHGVLDLAYLRCIPNITITAPLNEKDLRNLMFTAIQPNAKGVFVIRYPKGYGELKNWEYSFEALPVGKGRKLKEGKEIAVVSIGTIGNLARKAIRLVEKLGISVAHYDMIYLKPIDEELLHEIGKNYRCVVVIEDGTIKGGLGTAVIEFMVQNGYDPKIKQIGVPDEFIPHGTIAELYKLCGMDIKSIVKCLIEEK</sequence>
<name>DXS_AZOPC</name>
<accession>B6YRV5</accession>
<evidence type="ECO:0000255" key="1">
    <source>
        <dbReference type="HAMAP-Rule" id="MF_00315"/>
    </source>
</evidence>
<dbReference type="EC" id="2.2.1.7" evidence="1"/>
<dbReference type="EMBL" id="AP010656">
    <property type="protein sequence ID" value="BAG83927.1"/>
    <property type="molecule type" value="Genomic_DNA"/>
</dbReference>
<dbReference type="RefSeq" id="WP_012573687.1">
    <property type="nucleotide sequence ID" value="NC_011565.1"/>
</dbReference>
<dbReference type="SMR" id="B6YRV5"/>
<dbReference type="STRING" id="511995.CFPG_664"/>
<dbReference type="KEGG" id="aps:CFPG_664"/>
<dbReference type="eggNOG" id="COG1154">
    <property type="taxonomic scope" value="Bacteria"/>
</dbReference>
<dbReference type="HOGENOM" id="CLU_009227_1_4_10"/>
<dbReference type="OrthoDB" id="9803371at2"/>
<dbReference type="UniPathway" id="UPA00064">
    <property type="reaction ID" value="UER00091"/>
</dbReference>
<dbReference type="Proteomes" id="UP000000723">
    <property type="component" value="Chromosome"/>
</dbReference>
<dbReference type="GO" id="GO:0005829">
    <property type="term" value="C:cytosol"/>
    <property type="evidence" value="ECO:0007669"/>
    <property type="project" value="TreeGrafter"/>
</dbReference>
<dbReference type="GO" id="GO:0008661">
    <property type="term" value="F:1-deoxy-D-xylulose-5-phosphate synthase activity"/>
    <property type="evidence" value="ECO:0007669"/>
    <property type="project" value="UniProtKB-UniRule"/>
</dbReference>
<dbReference type="GO" id="GO:0000287">
    <property type="term" value="F:magnesium ion binding"/>
    <property type="evidence" value="ECO:0007669"/>
    <property type="project" value="UniProtKB-UniRule"/>
</dbReference>
<dbReference type="GO" id="GO:0030976">
    <property type="term" value="F:thiamine pyrophosphate binding"/>
    <property type="evidence" value="ECO:0007669"/>
    <property type="project" value="UniProtKB-UniRule"/>
</dbReference>
<dbReference type="GO" id="GO:0052865">
    <property type="term" value="P:1-deoxy-D-xylulose 5-phosphate biosynthetic process"/>
    <property type="evidence" value="ECO:0007669"/>
    <property type="project" value="UniProtKB-UniPathway"/>
</dbReference>
<dbReference type="GO" id="GO:0019288">
    <property type="term" value="P:isopentenyl diphosphate biosynthetic process, methylerythritol 4-phosphate pathway"/>
    <property type="evidence" value="ECO:0007669"/>
    <property type="project" value="TreeGrafter"/>
</dbReference>
<dbReference type="GO" id="GO:0016114">
    <property type="term" value="P:terpenoid biosynthetic process"/>
    <property type="evidence" value="ECO:0007669"/>
    <property type="project" value="UniProtKB-UniRule"/>
</dbReference>
<dbReference type="GO" id="GO:0009228">
    <property type="term" value="P:thiamine biosynthetic process"/>
    <property type="evidence" value="ECO:0007669"/>
    <property type="project" value="UniProtKB-UniRule"/>
</dbReference>
<dbReference type="CDD" id="cd02007">
    <property type="entry name" value="TPP_DXS"/>
    <property type="match status" value="1"/>
</dbReference>
<dbReference type="CDD" id="cd07033">
    <property type="entry name" value="TPP_PYR_DXS_TK_like"/>
    <property type="match status" value="1"/>
</dbReference>
<dbReference type="Gene3D" id="3.40.50.920">
    <property type="match status" value="1"/>
</dbReference>
<dbReference type="Gene3D" id="3.40.50.970">
    <property type="match status" value="2"/>
</dbReference>
<dbReference type="HAMAP" id="MF_00315">
    <property type="entry name" value="DXP_synth"/>
    <property type="match status" value="1"/>
</dbReference>
<dbReference type="InterPro" id="IPR005477">
    <property type="entry name" value="Dxylulose-5-P_synthase"/>
</dbReference>
<dbReference type="InterPro" id="IPR029061">
    <property type="entry name" value="THDP-binding"/>
</dbReference>
<dbReference type="InterPro" id="IPR009014">
    <property type="entry name" value="Transketo_C/PFOR_II"/>
</dbReference>
<dbReference type="InterPro" id="IPR005475">
    <property type="entry name" value="Transketolase-like_Pyr-bd"/>
</dbReference>
<dbReference type="InterPro" id="IPR033248">
    <property type="entry name" value="Transketolase_C"/>
</dbReference>
<dbReference type="NCBIfam" id="TIGR00204">
    <property type="entry name" value="dxs"/>
    <property type="match status" value="1"/>
</dbReference>
<dbReference type="NCBIfam" id="NF003933">
    <property type="entry name" value="PRK05444.2-2"/>
    <property type="match status" value="1"/>
</dbReference>
<dbReference type="PANTHER" id="PTHR43322">
    <property type="entry name" value="1-D-DEOXYXYLULOSE 5-PHOSPHATE SYNTHASE-RELATED"/>
    <property type="match status" value="1"/>
</dbReference>
<dbReference type="PANTHER" id="PTHR43322:SF5">
    <property type="entry name" value="1-DEOXY-D-XYLULOSE-5-PHOSPHATE SYNTHASE, CHLOROPLASTIC"/>
    <property type="match status" value="1"/>
</dbReference>
<dbReference type="Pfam" id="PF13292">
    <property type="entry name" value="DXP_synthase_N"/>
    <property type="match status" value="1"/>
</dbReference>
<dbReference type="Pfam" id="PF02779">
    <property type="entry name" value="Transket_pyr"/>
    <property type="match status" value="1"/>
</dbReference>
<dbReference type="Pfam" id="PF02780">
    <property type="entry name" value="Transketolase_C"/>
    <property type="match status" value="1"/>
</dbReference>
<dbReference type="SMART" id="SM00861">
    <property type="entry name" value="Transket_pyr"/>
    <property type="match status" value="1"/>
</dbReference>
<dbReference type="SUPFAM" id="SSF52518">
    <property type="entry name" value="Thiamin diphosphate-binding fold (THDP-binding)"/>
    <property type="match status" value="2"/>
</dbReference>
<dbReference type="SUPFAM" id="SSF52922">
    <property type="entry name" value="TK C-terminal domain-like"/>
    <property type="match status" value="1"/>
</dbReference>
<feature type="chain" id="PRO_1000115720" description="1-deoxy-D-xylulose-5-phosphate synthase">
    <location>
        <begin position="1"/>
        <end position="632"/>
    </location>
</feature>
<feature type="binding site" evidence="1">
    <location>
        <position position="79"/>
    </location>
    <ligand>
        <name>thiamine diphosphate</name>
        <dbReference type="ChEBI" id="CHEBI:58937"/>
    </ligand>
</feature>
<feature type="binding site" evidence="1">
    <location>
        <begin position="120"/>
        <end position="122"/>
    </location>
    <ligand>
        <name>thiamine diphosphate</name>
        <dbReference type="ChEBI" id="CHEBI:58937"/>
    </ligand>
</feature>
<feature type="binding site" evidence="1">
    <location>
        <position position="151"/>
    </location>
    <ligand>
        <name>Mg(2+)</name>
        <dbReference type="ChEBI" id="CHEBI:18420"/>
    </ligand>
</feature>
<feature type="binding site" evidence="1">
    <location>
        <begin position="152"/>
        <end position="153"/>
    </location>
    <ligand>
        <name>thiamine diphosphate</name>
        <dbReference type="ChEBI" id="CHEBI:58937"/>
    </ligand>
</feature>
<feature type="binding site" evidence="1">
    <location>
        <position position="180"/>
    </location>
    <ligand>
        <name>Mg(2+)</name>
        <dbReference type="ChEBI" id="CHEBI:18420"/>
    </ligand>
</feature>
<feature type="binding site" evidence="1">
    <location>
        <position position="180"/>
    </location>
    <ligand>
        <name>thiamine diphosphate</name>
        <dbReference type="ChEBI" id="CHEBI:58937"/>
    </ligand>
</feature>
<feature type="binding site" evidence="1">
    <location>
        <position position="292"/>
    </location>
    <ligand>
        <name>thiamine diphosphate</name>
        <dbReference type="ChEBI" id="CHEBI:58937"/>
    </ligand>
</feature>
<feature type="binding site" evidence="1">
    <location>
        <position position="376"/>
    </location>
    <ligand>
        <name>thiamine diphosphate</name>
        <dbReference type="ChEBI" id="CHEBI:58937"/>
    </ligand>
</feature>
<proteinExistence type="inferred from homology"/>